<evidence type="ECO:0000255" key="1">
    <source>
        <dbReference type="PROSITE-ProRule" id="PRU00042"/>
    </source>
</evidence>
<evidence type="ECO:0000256" key="2">
    <source>
        <dbReference type="SAM" id="MobiDB-lite"/>
    </source>
</evidence>
<evidence type="ECO:0000269" key="3">
    <source>
    </source>
</evidence>
<evidence type="ECO:0000269" key="4">
    <source>
    </source>
</evidence>
<evidence type="ECO:0000269" key="5">
    <source>
    </source>
</evidence>
<evidence type="ECO:0000269" key="6">
    <source>
    </source>
</evidence>
<evidence type="ECO:0000269" key="7">
    <source>
    </source>
</evidence>
<evidence type="ECO:0000269" key="8">
    <source>
    </source>
</evidence>
<evidence type="ECO:0000269" key="9">
    <source>
    </source>
</evidence>
<evidence type="ECO:0000269" key="10">
    <source>
    </source>
</evidence>
<evidence type="ECO:0000269" key="11">
    <source>
    </source>
</evidence>
<evidence type="ECO:0000269" key="12">
    <source>
    </source>
</evidence>
<evidence type="ECO:0000269" key="13">
    <source>
    </source>
</evidence>
<evidence type="ECO:0000269" key="14">
    <source>
    </source>
</evidence>
<evidence type="ECO:0000269" key="15">
    <source>
    </source>
</evidence>
<evidence type="ECO:0000269" key="16">
    <source>
    </source>
</evidence>
<evidence type="ECO:0000269" key="17">
    <source>
    </source>
</evidence>
<evidence type="ECO:0000303" key="18">
    <source>
    </source>
</evidence>
<evidence type="ECO:0000305" key="19"/>
<proteinExistence type="evidence at protein level"/>
<comment type="function">
    <text evidence="7 8 9">Transcription factor whose activation results in up-regulation of target genes, such as IGFII, leading to uncontrolled cell proliferation: when overexpressed in cultured cells, higher proliferation rate and transformation are observed. Other target genes such as CRLF1, CRABP2, CRIP2, PIGF are strongly induced in cells with PLAG1 induction. Proto-oncogene whose ectopic expression can trigger the development of pleomorphic adenomas of the salivary gland and lipoblastomas. Overexpression is associated with up-regulation of IGFII, is frequently observed in hepatoblastoma, common primary liver tumor in childhood. Cooperates with CBFB-MYH11, a fusion gene important for myeloid leukemia.</text>
</comment>
<comment type="subunit">
    <text evidence="6 10">Interacts with KPNA2, which escorts protein to the nucleus via interaction with nuclear localization signal. Interacts with E3 SUMO-protein ligase PIAS1, PIAS2 and PIAS4.</text>
</comment>
<comment type="subcellular location">
    <subcellularLocation>
        <location evidence="4 6 12">Nucleus</location>
    </subcellularLocation>
    <text>Strong nucleolar localization when sumoylation is inhibited.</text>
</comment>
<comment type="alternative products">
    <event type="alternative splicing"/>
    <isoform>
        <id>Q6DJT9-1</id>
        <name>1</name>
        <sequence type="displayed"/>
    </isoform>
    <isoform>
        <id>Q6DJT9-2</id>
        <name>2</name>
        <sequence type="described" ref="VSP_045183"/>
    </isoform>
</comment>
<comment type="tissue specificity">
    <text evidence="3 8 15 17">Expressed in fetal tissues such as lung, liver and kidney. Not detected or weak detection in normal adult tissues, but highly expressed in salivary gland with benign or malignant pleiomorphic adenomas with or without 8q12 aberrations, with preferential occurrence in benign tumors.</text>
</comment>
<comment type="domain">
    <text>C2H2-type zinc fingers 3 interacts with DNA-binding site G-clusterinc fingers. C2H2-type zinc fingers 6 and 7 interact with DNA-binding site core sequence.</text>
</comment>
<comment type="PTM">
    <text>Sumoylated with SUMO1; which inhibits transcriptional activity, but does not affect nuclear localization. Blockers of sumoylation pathway such as SENP3 and inactive UBE2I increases transcriptional capacity. Sumoylation is increased in the presence of PIAS1.</text>
</comment>
<comment type="PTM">
    <text evidence="12">Acetylated by lysine acetyltransferase EP300; which activates transcriptional capacity. Lysine residues that are sumoylated also seem to be target for acetylation.</text>
</comment>
<comment type="disease" evidence="14">
    <disease id="DI-05850">
        <name>Silver-Russell syndrome 4</name>
        <acronym>SRS4</acronym>
        <description>A form of Silver-Russell syndrome, a clinically heterogeneous condition characterized by severe intrauterine growth retardation, poor postnatal growth, craniofacial features such as a triangular shaped face and a broad forehead, body asymmetry, and a variety of minor malformations. The phenotypic expression changes during childhood and adolescence, with the facial features and asymmetry usually becoming more subtle with age. SRS4 inheritance is autosomal dominant.</description>
        <dbReference type="MIM" id="618907"/>
    </disease>
    <text>The disease is caused by variants affecting the gene represented in this entry.</text>
</comment>
<comment type="disease">
    <text evidence="3 13 15 16">A chromosomal aberration involving PLAG1 is found in salivary gland pleiomorphic adenomas, the most common benign epithelial tumors of the salivary gland. Translocation t(3;8)(p21;q12) with constitutively expressed beta-catenin/CTNNB1. Fusion occurs in the 5'-regulatory regions, leading to promoter swapping between the 2 genes and activation of PLAG1 expression in adenomas. The chimeric transcript is formed by fusion of CTNNB1 exon 1 to PLAG1 exon 3. Reciprocal fusion transcript consisting of PLAG1 exon 1 and CTNNB1 exon 2-16 is also revealed in some adenomas (PubMed:10029085, PubMed:9020842). Translocation t(3;8)(p21;q12) with transcription elongation factor SII/TCEA1. The fusion transcript is composed of 5'-non-coding sequences as well as 63 nucleotides of the coding region of TCEA1 fused to the acceptor splice site of PLAG1 exon 3. The fusion transcript encodes a truncated TCEA1-PLAG1 protein of 90 AA as well as an apparently normal PLAG1 protein. Reciprocal fusion transcript PLAG1-TCEA1 is also present in one adenoma (PubMed:10029085, PubMed:16736500). Translocation t(5;8)(p13;q12) with leukemia inhibitory factor receptor LIFR. This fusion occured in the 5'-non-coding sequences of both genes, exchanging regulatory control element while preserving the coding sequences (PubMed:9525740). Translocation t(6;8)(p21.3-22;q13) with Coiled-coil-helix-coiled-coil-helix domain-containing protein 7/CHCHD7. Fusion occurs in the 5' regulatory regions, leading to promoter swapping and up-regulation of PLAG1 expression (PubMed:16736500). Ectopic expression of PLAG1 under the control of promoters of distinct translocation partner genes is a general pathogenetic mechanism for pleiomorphic adenomas with 8q aberrations. These fusion genes are likely to be found in adenomas with normal karyotype as this subgroup of tumors also exhibit PLAG1 activation (PubMed:10029085, PubMed:16736500, PubMed:9020842, PubMed:9525740).</text>
</comment>
<comment type="disease">
    <text evidence="5 11">A chromosomal aberration involving PLAG1 may be a cause of lipoblastomas, which are benign tumors resulting from transformation of adipocytes, usually diagnosed in children. 8q12.1 to 8q24.1 intrachromosomal rearrangement with hyaluronic acid synthase 2/HAS2 results in promoter swapping and activation of PLAG1 expression. The breakpoint of HAS2 gene is in PLAG1 intron 1, whereas its coding sequence starts at exon 2 or exon 3. Translocation t(7;8)(p22;q13) with collagen 1A2/COL1A2. Fusion transcript COL1A2-PLAG1 as well as HAS2-PLAG1 encode a full-length PLAG1 protein.</text>
</comment>
<comment type="miscellaneous">
    <text>Residual nuclear import after mutation of the nuclear localization signal is assigned to zinc finger domains of PLAG1.</text>
</comment>
<comment type="miscellaneous">
    <text>When cultured cells transformed by PLAG1 overexpression are injected in nude mouse, rapidly growing tumors (fibrosarcomaS) are observed at the site of inoculation.</text>
</comment>
<comment type="similarity">
    <text evidence="19">Belongs to the krueppel C2H2-type zinc-finger protein family.</text>
</comment>
<comment type="sequence caution" evidence="19">
    <conflict type="erroneous initiation">
        <sequence resource="EMBL-CDS" id="BAD92368"/>
    </conflict>
</comment>
<comment type="online information" name="Atlas of Genetics and Cytogenetics in Oncology and Haematology">
    <link uri="https://atlasgeneticsoncology.org/gene/74/PLAG1"/>
</comment>
<sequence>MATVIPGDLSEVRDTQKVPSGKRKRGETKPRKNFPCQLCDKAFNSVEKLKVHSYSHTGERPYKCIQQDCTKAFVSKYKLQRHMATHSPEKTHKCNYCEKMFHRKDHLKNHLHTHDPNKETFKCEECGKNYNTKLGFKRHLALHAATSGDLTCKVCLQTFESTGVLLEHLKSHAGKSSGGVKEKKHQCEHCDRRFYTRKDVRRHMVVHTGRKDFLCQYCAQRFGRKDHLTRHMKKSHNQELLKVKTEPVDFLDPFTCNVSVPIKDELLPVMSLPSSELLSKPFTNTLQLNLYNTPFQSMQSSGSAHQMITTLPLGMTCPIDMDTVHPSHHLSFKYPFSSTSYAISIPEKEQPLKGEIESYLMELQGGVPSSSQDSQASSSSKLGLDPQIGSLDDGAGDLSLSKSSISISDPLNTPALDFSQLFNFIPLNGPPYNPLSVGSLGMSYSQEEAHSSVSQLPPQTQDLQDPANTIGLGSLHSLSAAFTSSLSTSTTLPRFHQAFQ</sequence>
<name>PLAG1_HUMAN</name>
<gene>
    <name type="primary">PLAG1</name>
</gene>
<accession>Q6DJT9</accession>
<accession>B4DLC2</accession>
<accession>Q59GH8</accession>
<accession>Q9Y4L2</accession>
<dbReference type="EMBL" id="U65002">
    <property type="protein sequence ID" value="AAC50995.1"/>
    <property type="molecule type" value="mRNA"/>
</dbReference>
<dbReference type="EMBL" id="AK296933">
    <property type="protein sequence ID" value="BAG59484.1"/>
    <property type="molecule type" value="mRNA"/>
</dbReference>
<dbReference type="EMBL" id="AB209131">
    <property type="protein sequence ID" value="BAD92368.1"/>
    <property type="status" value="ALT_INIT"/>
    <property type="molecule type" value="mRNA"/>
</dbReference>
<dbReference type="EMBL" id="AC107952">
    <property type="status" value="NOT_ANNOTATED_CDS"/>
    <property type="molecule type" value="Genomic_DNA"/>
</dbReference>
<dbReference type="EMBL" id="BC075047">
    <property type="protein sequence ID" value="AAH75047.1"/>
    <property type="molecule type" value="mRNA"/>
</dbReference>
<dbReference type="EMBL" id="BC075048">
    <property type="protein sequence ID" value="AAH75048.1"/>
    <property type="molecule type" value="mRNA"/>
</dbReference>
<dbReference type="CCDS" id="CCDS47860.1">
    <molecule id="Q6DJT9-2"/>
</dbReference>
<dbReference type="CCDS" id="CCDS6165.1">
    <molecule id="Q6DJT9-1"/>
</dbReference>
<dbReference type="RefSeq" id="NP_001108106.1">
    <molecule id="Q6DJT9-1"/>
    <property type="nucleotide sequence ID" value="NM_001114634.2"/>
</dbReference>
<dbReference type="RefSeq" id="NP_001108107.1">
    <molecule id="Q6DJT9-2"/>
    <property type="nucleotide sequence ID" value="NM_001114635.2"/>
</dbReference>
<dbReference type="RefSeq" id="NP_002646.2">
    <molecule id="Q6DJT9-1"/>
    <property type="nucleotide sequence ID" value="NM_002655.3"/>
</dbReference>
<dbReference type="RefSeq" id="XP_011515846.1">
    <property type="nucleotide sequence ID" value="XM_011517544.2"/>
</dbReference>
<dbReference type="RefSeq" id="XP_016869065.1">
    <molecule id="Q6DJT9-1"/>
    <property type="nucleotide sequence ID" value="XM_017013576.2"/>
</dbReference>
<dbReference type="RefSeq" id="XP_016869066.1">
    <property type="nucleotide sequence ID" value="XM_017013577.1"/>
</dbReference>
<dbReference type="RefSeq" id="XP_047277822.1">
    <molecule id="Q6DJT9-2"/>
    <property type="nucleotide sequence ID" value="XM_047421866.1"/>
</dbReference>
<dbReference type="RefSeq" id="XP_047277823.1">
    <molecule id="Q6DJT9-2"/>
    <property type="nucleotide sequence ID" value="XM_047421867.1"/>
</dbReference>
<dbReference type="SMR" id="Q6DJT9"/>
<dbReference type="BioGRID" id="111340">
    <property type="interactions" value="8"/>
</dbReference>
<dbReference type="FunCoup" id="Q6DJT9">
    <property type="interactions" value="1175"/>
</dbReference>
<dbReference type="IntAct" id="Q6DJT9">
    <property type="interactions" value="6"/>
</dbReference>
<dbReference type="MINT" id="Q6DJT9"/>
<dbReference type="STRING" id="9606.ENSP00000325546"/>
<dbReference type="iPTMnet" id="Q6DJT9"/>
<dbReference type="PhosphoSitePlus" id="Q6DJT9"/>
<dbReference type="BioMuta" id="PLAG1"/>
<dbReference type="DMDM" id="74757442"/>
<dbReference type="jPOST" id="Q6DJT9"/>
<dbReference type="MassIVE" id="Q6DJT9"/>
<dbReference type="PaxDb" id="9606-ENSP00000325546"/>
<dbReference type="PeptideAtlas" id="Q6DJT9"/>
<dbReference type="ProteomicsDB" id="4523"/>
<dbReference type="ProteomicsDB" id="66229">
    <molecule id="Q6DJT9-1"/>
</dbReference>
<dbReference type="Antibodypedia" id="1454">
    <property type="antibodies" value="243 antibodies from 26 providers"/>
</dbReference>
<dbReference type="DNASU" id="5324"/>
<dbReference type="Ensembl" id="ENST00000316981.8">
    <molecule id="Q6DJT9-1"/>
    <property type="protein sequence ID" value="ENSP00000325546.3"/>
    <property type="gene ID" value="ENSG00000181690.8"/>
</dbReference>
<dbReference type="Ensembl" id="ENST00000423799.6">
    <molecule id="Q6DJT9-2"/>
    <property type="protein sequence ID" value="ENSP00000404067.2"/>
    <property type="gene ID" value="ENSG00000181690.8"/>
</dbReference>
<dbReference type="Ensembl" id="ENST00000429357.2">
    <molecule id="Q6DJT9-1"/>
    <property type="protein sequence ID" value="ENSP00000416537.2"/>
    <property type="gene ID" value="ENSG00000181690.8"/>
</dbReference>
<dbReference type="GeneID" id="5324"/>
<dbReference type="KEGG" id="hsa:5324"/>
<dbReference type="MANE-Select" id="ENST00000316981.8">
    <property type="protein sequence ID" value="ENSP00000325546.3"/>
    <property type="RefSeq nucleotide sequence ID" value="NM_002655.3"/>
    <property type="RefSeq protein sequence ID" value="NP_002646.2"/>
</dbReference>
<dbReference type="UCSC" id="uc003xsr.5">
    <molecule id="Q6DJT9-1"/>
    <property type="organism name" value="human"/>
</dbReference>
<dbReference type="AGR" id="HGNC:9045"/>
<dbReference type="CTD" id="5324"/>
<dbReference type="DisGeNET" id="5324"/>
<dbReference type="GeneCards" id="PLAG1"/>
<dbReference type="GeneReviews" id="PLAG1"/>
<dbReference type="HGNC" id="HGNC:9045">
    <property type="gene designation" value="PLAG1"/>
</dbReference>
<dbReference type="HPA" id="ENSG00000181690">
    <property type="expression patterns" value="Tissue enhanced (retina)"/>
</dbReference>
<dbReference type="MalaCards" id="PLAG1"/>
<dbReference type="MIM" id="181030">
    <property type="type" value="phenotype"/>
</dbReference>
<dbReference type="MIM" id="603026">
    <property type="type" value="gene"/>
</dbReference>
<dbReference type="MIM" id="618907">
    <property type="type" value="phenotype"/>
</dbReference>
<dbReference type="neXtProt" id="NX_Q6DJT9"/>
<dbReference type="OpenTargets" id="ENSG00000181690"/>
<dbReference type="Orphanet" id="276148">
    <property type="disease" value="Benign epithelial tumor of salivary glands"/>
</dbReference>
<dbReference type="Orphanet" id="397590">
    <property type="disease" value="Silver-Russell syndrome due to a point mutation"/>
</dbReference>
<dbReference type="PharmGKB" id="PA33378"/>
<dbReference type="VEuPathDB" id="HostDB:ENSG00000181690"/>
<dbReference type="eggNOG" id="KOG1721">
    <property type="taxonomic scope" value="Eukaryota"/>
</dbReference>
<dbReference type="GeneTree" id="ENSGT00940000159246"/>
<dbReference type="HOGENOM" id="CLU_002678_66_1_1"/>
<dbReference type="InParanoid" id="Q6DJT9"/>
<dbReference type="OMA" id="KEAFACQ"/>
<dbReference type="OrthoDB" id="3533395at2759"/>
<dbReference type="PAN-GO" id="Q6DJT9">
    <property type="GO annotations" value="3 GO annotations based on evolutionary models"/>
</dbReference>
<dbReference type="PhylomeDB" id="Q6DJT9"/>
<dbReference type="TreeFam" id="TF332024"/>
<dbReference type="PathwayCommons" id="Q6DJT9"/>
<dbReference type="SignaLink" id="Q6DJT9"/>
<dbReference type="SIGNOR" id="Q6DJT9"/>
<dbReference type="BioGRID-ORCS" id="5324">
    <property type="hits" value="10 hits in 1173 CRISPR screens"/>
</dbReference>
<dbReference type="ChiTaRS" id="PLAG1">
    <property type="organism name" value="human"/>
</dbReference>
<dbReference type="GeneWiki" id="PLAG1"/>
<dbReference type="GenomeRNAi" id="5324"/>
<dbReference type="Pharos" id="Q6DJT9">
    <property type="development level" value="Tbio"/>
</dbReference>
<dbReference type="PRO" id="PR:Q6DJT9"/>
<dbReference type="Proteomes" id="UP000005640">
    <property type="component" value="Chromosome 8"/>
</dbReference>
<dbReference type="RNAct" id="Q6DJT9">
    <property type="molecule type" value="protein"/>
</dbReference>
<dbReference type="Bgee" id="ENSG00000181690">
    <property type="expression patterns" value="Expressed in secondary oocyte and 140 other cell types or tissues"/>
</dbReference>
<dbReference type="ExpressionAtlas" id="Q6DJT9">
    <property type="expression patterns" value="baseline and differential"/>
</dbReference>
<dbReference type="GO" id="GO:0005813">
    <property type="term" value="C:centrosome"/>
    <property type="evidence" value="ECO:0000314"/>
    <property type="project" value="HPA"/>
</dbReference>
<dbReference type="GO" id="GO:0005829">
    <property type="term" value="C:cytosol"/>
    <property type="evidence" value="ECO:0000314"/>
    <property type="project" value="HPA"/>
</dbReference>
<dbReference type="GO" id="GO:0016607">
    <property type="term" value="C:nuclear speck"/>
    <property type="evidence" value="ECO:0000314"/>
    <property type="project" value="HPA"/>
</dbReference>
<dbReference type="GO" id="GO:0005654">
    <property type="term" value="C:nucleoplasm"/>
    <property type="evidence" value="ECO:0000314"/>
    <property type="project" value="HPA"/>
</dbReference>
<dbReference type="GO" id="GO:0001228">
    <property type="term" value="F:DNA-binding transcription activator activity, RNA polymerase II-specific"/>
    <property type="evidence" value="ECO:0000314"/>
    <property type="project" value="NTNU_SB"/>
</dbReference>
<dbReference type="GO" id="GO:0003700">
    <property type="term" value="F:DNA-binding transcription factor activity"/>
    <property type="evidence" value="ECO:0000304"/>
    <property type="project" value="ProtInc"/>
</dbReference>
<dbReference type="GO" id="GO:0000981">
    <property type="term" value="F:DNA-binding transcription factor activity, RNA polymerase II-specific"/>
    <property type="evidence" value="ECO:0000318"/>
    <property type="project" value="GO_Central"/>
</dbReference>
<dbReference type="GO" id="GO:0000978">
    <property type="term" value="F:RNA polymerase II cis-regulatory region sequence-specific DNA binding"/>
    <property type="evidence" value="ECO:0000314"/>
    <property type="project" value="NTNU_SB"/>
</dbReference>
<dbReference type="GO" id="GO:0008270">
    <property type="term" value="F:zinc ion binding"/>
    <property type="evidence" value="ECO:0007669"/>
    <property type="project" value="UniProtKB-KW"/>
</dbReference>
<dbReference type="GO" id="GO:0022612">
    <property type="term" value="P:gland morphogenesis"/>
    <property type="evidence" value="ECO:0007669"/>
    <property type="project" value="Ensembl"/>
</dbReference>
<dbReference type="GO" id="GO:0035264">
    <property type="term" value="P:multicellular organism growth"/>
    <property type="evidence" value="ECO:0007669"/>
    <property type="project" value="Ensembl"/>
</dbReference>
<dbReference type="GO" id="GO:0010629">
    <property type="term" value="P:negative regulation of gene expression"/>
    <property type="evidence" value="ECO:0007669"/>
    <property type="project" value="Ensembl"/>
</dbReference>
<dbReference type="GO" id="GO:0010628">
    <property type="term" value="P:positive regulation of gene expression"/>
    <property type="evidence" value="ECO:0007669"/>
    <property type="project" value="Ensembl"/>
</dbReference>
<dbReference type="GO" id="GO:0060252">
    <property type="term" value="P:positive regulation of glial cell proliferation"/>
    <property type="evidence" value="ECO:0007669"/>
    <property type="project" value="Ensembl"/>
</dbReference>
<dbReference type="GO" id="GO:0045944">
    <property type="term" value="P:positive regulation of transcription by RNA polymerase II"/>
    <property type="evidence" value="ECO:0000314"/>
    <property type="project" value="NTNU_SB"/>
</dbReference>
<dbReference type="GO" id="GO:0060736">
    <property type="term" value="P:prostate gland growth"/>
    <property type="evidence" value="ECO:0007669"/>
    <property type="project" value="Ensembl"/>
</dbReference>
<dbReference type="GO" id="GO:0006355">
    <property type="term" value="P:regulation of DNA-templated transcription"/>
    <property type="evidence" value="ECO:0000318"/>
    <property type="project" value="GO_Central"/>
</dbReference>
<dbReference type="FunFam" id="3.30.160.60:FF:000425">
    <property type="entry name" value="PLAG1 like zinc finger 1"/>
    <property type="match status" value="1"/>
</dbReference>
<dbReference type="FunFam" id="3.30.160.60:FF:000482">
    <property type="entry name" value="PLAG1 like zinc finger 1"/>
    <property type="match status" value="1"/>
</dbReference>
<dbReference type="FunFam" id="3.30.160.60:FF:000231">
    <property type="entry name" value="PLAG1 like zinc finger 2"/>
    <property type="match status" value="1"/>
</dbReference>
<dbReference type="FunFam" id="3.30.160.60:FF:000256">
    <property type="entry name" value="PLAG1 like zinc finger 2"/>
    <property type="match status" value="1"/>
</dbReference>
<dbReference type="FunFam" id="3.30.160.60:FF:001316">
    <property type="entry name" value="PR domain zinc finger protein 10"/>
    <property type="match status" value="1"/>
</dbReference>
<dbReference type="Gene3D" id="3.30.160.60">
    <property type="entry name" value="Classic Zinc Finger"/>
    <property type="match status" value="6"/>
</dbReference>
<dbReference type="InterPro" id="IPR036236">
    <property type="entry name" value="Znf_C2H2_sf"/>
</dbReference>
<dbReference type="InterPro" id="IPR013087">
    <property type="entry name" value="Znf_C2H2_type"/>
</dbReference>
<dbReference type="PANTHER" id="PTHR24399">
    <property type="entry name" value="ZINC FINGER AND BTB DOMAIN-CONTAINING"/>
    <property type="match status" value="1"/>
</dbReference>
<dbReference type="PANTHER" id="PTHR24399:SF31">
    <property type="entry name" value="ZINC FINGER PROTEIN PLAGL1"/>
    <property type="match status" value="1"/>
</dbReference>
<dbReference type="Pfam" id="PF00096">
    <property type="entry name" value="zf-C2H2"/>
    <property type="match status" value="4"/>
</dbReference>
<dbReference type="Pfam" id="PF13912">
    <property type="entry name" value="zf-C2H2_6"/>
    <property type="match status" value="2"/>
</dbReference>
<dbReference type="SMART" id="SM00355">
    <property type="entry name" value="ZnF_C2H2"/>
    <property type="match status" value="7"/>
</dbReference>
<dbReference type="SUPFAM" id="SSF57667">
    <property type="entry name" value="beta-beta-alpha zinc fingers"/>
    <property type="match status" value="4"/>
</dbReference>
<dbReference type="PROSITE" id="PS00028">
    <property type="entry name" value="ZINC_FINGER_C2H2_1"/>
    <property type="match status" value="7"/>
</dbReference>
<dbReference type="PROSITE" id="PS50157">
    <property type="entry name" value="ZINC_FINGER_C2H2_2"/>
    <property type="match status" value="7"/>
</dbReference>
<keyword id="KW-0007">Acetylation</keyword>
<keyword id="KW-0010">Activator</keyword>
<keyword id="KW-0025">Alternative splicing</keyword>
<keyword id="KW-0160">Chromosomal rearrangement</keyword>
<keyword id="KW-0238">DNA-binding</keyword>
<keyword id="KW-0242">Dwarfism</keyword>
<keyword id="KW-1017">Isopeptide bond</keyword>
<keyword id="KW-0479">Metal-binding</keyword>
<keyword id="KW-0539">Nucleus</keyword>
<keyword id="KW-1267">Proteomics identification</keyword>
<keyword id="KW-0656">Proto-oncogene</keyword>
<keyword id="KW-1185">Reference proteome</keyword>
<keyword id="KW-0677">Repeat</keyword>
<keyword id="KW-0804">Transcription</keyword>
<keyword id="KW-0805">Transcription regulation</keyword>
<keyword id="KW-0832">Ubl conjugation</keyword>
<keyword id="KW-0862">Zinc</keyword>
<keyword id="KW-0863">Zinc-finger</keyword>
<organism>
    <name type="scientific">Homo sapiens</name>
    <name type="common">Human</name>
    <dbReference type="NCBI Taxonomy" id="9606"/>
    <lineage>
        <taxon>Eukaryota</taxon>
        <taxon>Metazoa</taxon>
        <taxon>Chordata</taxon>
        <taxon>Craniata</taxon>
        <taxon>Vertebrata</taxon>
        <taxon>Euteleostomi</taxon>
        <taxon>Mammalia</taxon>
        <taxon>Eutheria</taxon>
        <taxon>Euarchontoglires</taxon>
        <taxon>Primates</taxon>
        <taxon>Haplorrhini</taxon>
        <taxon>Catarrhini</taxon>
        <taxon>Hominidae</taxon>
        <taxon>Homo</taxon>
    </lineage>
</organism>
<feature type="chain" id="PRO_0000295107" description="Zinc finger protein PLAG1">
    <location>
        <begin position="1"/>
        <end position="500"/>
    </location>
</feature>
<feature type="zinc finger region" description="C2H2-type 1" evidence="1">
    <location>
        <begin position="34"/>
        <end position="56"/>
    </location>
</feature>
<feature type="zinc finger region" description="C2H2-type 2" evidence="1">
    <location>
        <begin position="62"/>
        <end position="86"/>
    </location>
</feature>
<feature type="zinc finger region" description="C2H2-type 3" evidence="1">
    <location>
        <begin position="92"/>
        <end position="114"/>
    </location>
</feature>
<feature type="zinc finger region" description="C2H2-type 4" evidence="1">
    <location>
        <begin position="121"/>
        <end position="143"/>
    </location>
</feature>
<feature type="zinc finger region" description="C2H2-type 5" evidence="1">
    <location>
        <begin position="150"/>
        <end position="172"/>
    </location>
</feature>
<feature type="zinc finger region" description="C2H2-type 6" evidence="1">
    <location>
        <begin position="185"/>
        <end position="207"/>
    </location>
</feature>
<feature type="zinc finger region" description="C2H2-type 7" evidence="1">
    <location>
        <begin position="213"/>
        <end position="236"/>
    </location>
</feature>
<feature type="region of interest" description="Disordered" evidence="2">
    <location>
        <begin position="1"/>
        <end position="30"/>
    </location>
</feature>
<feature type="region of interest" description="Interaction with KPNA2" evidence="6">
    <location>
        <begin position="2"/>
        <end position="84"/>
    </location>
</feature>
<feature type="region of interest" description="Decreased nuclear import with localization in the nucleus but also in the cytoplasm">
    <location>
        <begin position="41"/>
        <end position="242"/>
    </location>
</feature>
<feature type="region of interest" description="Activates transcription; Inhibition of nuclear import due to lack of NLS and KPNA2 interaction">
    <location>
        <begin position="243"/>
        <end position="500"/>
    </location>
</feature>
<feature type="region of interest" description="Repression domain; contains 3 sumoylation motifs and massively decrease transcription activity">
    <location>
        <begin position="243"/>
        <end position="384"/>
    </location>
</feature>
<feature type="region of interest" description="Disordered" evidence="2">
    <location>
        <begin position="365"/>
        <end position="388"/>
    </location>
</feature>
<feature type="region of interest" description="Massively activates transcription">
    <location>
        <begin position="385"/>
        <end position="500"/>
    </location>
</feature>
<feature type="short sequence motif" description="Nuclear localization signal">
    <location>
        <begin position="22"/>
        <end position="25"/>
    </location>
</feature>
<feature type="compositionally biased region" description="Low complexity" evidence="2">
    <location>
        <begin position="369"/>
        <end position="380"/>
    </location>
</feature>
<feature type="cross-link" description="Glycyl lysine isopeptide (Lys-Gly) (interchain with G-Cter in SUMO)">
    <location>
        <position position="244"/>
    </location>
</feature>
<feature type="cross-link" description="Glycyl lysine isopeptide (Lys-Gly) (interchain with G-Cter in SUMO)">
    <location>
        <position position="263"/>
    </location>
</feature>
<feature type="splice variant" id="VSP_045183" description="In isoform 2." evidence="18">
    <location>
        <begin position="1"/>
        <end position="82"/>
    </location>
</feature>
<feature type="sequence variant" id="VAR_033212" description="In dbSNP:rs35883156." evidence="15">
    <original>P</original>
    <variation>T</variation>
    <location>
        <position position="458"/>
    </location>
</feature>
<feature type="mutagenesis site" description="Inhibition of KPNA2 interaction when mutation occurs in the NLS; decreased nuclear import with localization in the nucleus but also in the cytoplasm; Complete inhibition of nuclear import when associated with a lack of zinc-finger domains." evidence="6">
    <original>RK</original>
    <variation>AA</variation>
    <location>
        <begin position="23"/>
        <end position="24"/>
    </location>
</feature>
<feature type="mutagenesis site" description="No inhibition of KPNA2 interaction and no change in nuclear import." evidence="6">
    <original>RK</original>
    <variation>AA</variation>
    <location>
        <begin position="31"/>
        <end position="32"/>
    </location>
</feature>
<feature type="mutagenesis site" description="Prevents formation of functional zinc-finger 3; induces drastic decrease of DNA affinity and complete modification of DNA binding specificity." evidence="4">
    <original>H</original>
    <variation>A</variation>
    <location>
        <position position="92"/>
    </location>
</feature>
<feature type="mutagenesis site" description="Prevents formation of functional zinc-finger 7 and inhibits DNA binding; No proliferation and transformation of cultured cells." evidence="4 7">
    <original>H</original>
    <variation>A</variation>
    <location>
        <position position="227"/>
    </location>
</feature>
<feature type="mutagenesis site" description="Abolishes single and double sumoylation; nuclear localization conserved. Increases transcriptional activity and inhibits repression domain activity; when associated with R-263 and R-353." evidence="10 12">
    <original>K</original>
    <variation>R</variation>
    <location>
        <position position="244"/>
    </location>
</feature>
<feature type="mutagenesis site" description="Decreases sumoylation; Abolishes double sumoylation only; Nuclear localization conserved. Increases transcriptional activity and inhibits repression domain activity; when associated with R-244 and R-353." evidence="10 12">
    <original>K</original>
    <variation>R</variation>
    <location>
        <position position="263"/>
    </location>
</feature>
<feature type="mutagenesis site" description="No effect on transcription activation capacity." evidence="17">
    <original>T</original>
    <variation>A</variation>
    <location>
        <position position="339"/>
    </location>
</feature>
<feature type="mutagenesis site" description="No effect on transcription activation capacity." evidence="17">
    <original>S</original>
    <variation>A</variation>
    <location>
        <position position="340"/>
    </location>
</feature>
<feature type="mutagenesis site" description="No effect on sumoylation. Increases transcriptional activity and inhibits repression domain activity; when associated with R-244 and R-263." evidence="10 12">
    <original>K</original>
    <variation>R</variation>
    <location>
        <position position="353"/>
    </location>
</feature>
<feature type="sequence conflict" description="In Ref. 3; BAD92368." evidence="19" ref="3">
    <original>E</original>
    <variation>D</variation>
    <location>
        <position position="276"/>
    </location>
</feature>
<protein>
    <recommendedName>
        <fullName>Zinc finger protein PLAG1</fullName>
    </recommendedName>
    <alternativeName>
        <fullName>Pleiomorphic adenoma gene 1 protein</fullName>
    </alternativeName>
</protein>
<reference key="1">
    <citation type="journal article" date="1997" name="Nat. Genet.">
        <title>Promoter swapping between the genes for a novel zinc finger protein and beta-catenin in pleiomorphic adenomas with t(3;8)(p21;q12) translocations.</title>
        <authorList>
            <person name="Kas K."/>
            <person name="Voz M.L."/>
            <person name="Roeijer E."/>
            <person name="Astroem A.-K."/>
            <person name="Meyen E."/>
            <person name="Stenman G."/>
            <person name="Van de Ven W.J.M."/>
        </authorList>
    </citation>
    <scope>NUCLEOTIDE SEQUENCE [MRNA] (ISOFORM 1)</scope>
    <scope>TISSUE SPECIFICITY</scope>
    <scope>CHROMOSOMAL TRANSLOCATION WITH CTNNB1</scope>
    <scope>VARIANT THR-458</scope>
</reference>
<reference key="2">
    <citation type="journal article" date="2004" name="Nat. Genet.">
        <title>Complete sequencing and characterization of 21,243 full-length human cDNAs.</title>
        <authorList>
            <person name="Ota T."/>
            <person name="Suzuki Y."/>
            <person name="Nishikawa T."/>
            <person name="Otsuki T."/>
            <person name="Sugiyama T."/>
            <person name="Irie R."/>
            <person name="Wakamatsu A."/>
            <person name="Hayashi K."/>
            <person name="Sato H."/>
            <person name="Nagai K."/>
            <person name="Kimura K."/>
            <person name="Makita H."/>
            <person name="Sekine M."/>
            <person name="Obayashi M."/>
            <person name="Nishi T."/>
            <person name="Shibahara T."/>
            <person name="Tanaka T."/>
            <person name="Ishii S."/>
            <person name="Yamamoto J."/>
            <person name="Saito K."/>
            <person name="Kawai Y."/>
            <person name="Isono Y."/>
            <person name="Nakamura Y."/>
            <person name="Nagahari K."/>
            <person name="Murakami K."/>
            <person name="Yasuda T."/>
            <person name="Iwayanagi T."/>
            <person name="Wagatsuma M."/>
            <person name="Shiratori A."/>
            <person name="Sudo H."/>
            <person name="Hosoiri T."/>
            <person name="Kaku Y."/>
            <person name="Kodaira H."/>
            <person name="Kondo H."/>
            <person name="Sugawara M."/>
            <person name="Takahashi M."/>
            <person name="Kanda K."/>
            <person name="Yokoi T."/>
            <person name="Furuya T."/>
            <person name="Kikkawa E."/>
            <person name="Omura Y."/>
            <person name="Abe K."/>
            <person name="Kamihara K."/>
            <person name="Katsuta N."/>
            <person name="Sato K."/>
            <person name="Tanikawa M."/>
            <person name="Yamazaki M."/>
            <person name="Ninomiya K."/>
            <person name="Ishibashi T."/>
            <person name="Yamashita H."/>
            <person name="Murakawa K."/>
            <person name="Fujimori K."/>
            <person name="Tanai H."/>
            <person name="Kimata M."/>
            <person name="Watanabe M."/>
            <person name="Hiraoka S."/>
            <person name="Chiba Y."/>
            <person name="Ishida S."/>
            <person name="Ono Y."/>
            <person name="Takiguchi S."/>
            <person name="Watanabe S."/>
            <person name="Yosida M."/>
            <person name="Hotuta T."/>
            <person name="Kusano J."/>
            <person name="Kanehori K."/>
            <person name="Takahashi-Fujii A."/>
            <person name="Hara H."/>
            <person name="Tanase T.-O."/>
            <person name="Nomura Y."/>
            <person name="Togiya S."/>
            <person name="Komai F."/>
            <person name="Hara R."/>
            <person name="Takeuchi K."/>
            <person name="Arita M."/>
            <person name="Imose N."/>
            <person name="Musashino K."/>
            <person name="Yuuki H."/>
            <person name="Oshima A."/>
            <person name="Sasaki N."/>
            <person name="Aotsuka S."/>
            <person name="Yoshikawa Y."/>
            <person name="Matsunawa H."/>
            <person name="Ichihara T."/>
            <person name="Shiohata N."/>
            <person name="Sano S."/>
            <person name="Moriya S."/>
            <person name="Momiyama H."/>
            <person name="Satoh N."/>
            <person name="Takami S."/>
            <person name="Terashima Y."/>
            <person name="Suzuki O."/>
            <person name="Nakagawa S."/>
            <person name="Senoh A."/>
            <person name="Mizoguchi H."/>
            <person name="Goto Y."/>
            <person name="Shimizu F."/>
            <person name="Wakebe H."/>
            <person name="Hishigaki H."/>
            <person name="Watanabe T."/>
            <person name="Sugiyama A."/>
            <person name="Takemoto M."/>
            <person name="Kawakami B."/>
            <person name="Yamazaki M."/>
            <person name="Watanabe K."/>
            <person name="Kumagai A."/>
            <person name="Itakura S."/>
            <person name="Fukuzumi Y."/>
            <person name="Fujimori Y."/>
            <person name="Komiyama M."/>
            <person name="Tashiro H."/>
            <person name="Tanigami A."/>
            <person name="Fujiwara T."/>
            <person name="Ono T."/>
            <person name="Yamada K."/>
            <person name="Fujii Y."/>
            <person name="Ozaki K."/>
            <person name="Hirao M."/>
            <person name="Ohmori Y."/>
            <person name="Kawabata A."/>
            <person name="Hikiji T."/>
            <person name="Kobatake N."/>
            <person name="Inagaki H."/>
            <person name="Ikema Y."/>
            <person name="Okamoto S."/>
            <person name="Okitani R."/>
            <person name="Kawakami T."/>
            <person name="Noguchi S."/>
            <person name="Itoh T."/>
            <person name="Shigeta K."/>
            <person name="Senba T."/>
            <person name="Matsumura K."/>
            <person name="Nakajima Y."/>
            <person name="Mizuno T."/>
            <person name="Morinaga M."/>
            <person name="Sasaki M."/>
            <person name="Togashi T."/>
            <person name="Oyama M."/>
            <person name="Hata H."/>
            <person name="Watanabe M."/>
            <person name="Komatsu T."/>
            <person name="Mizushima-Sugano J."/>
            <person name="Satoh T."/>
            <person name="Shirai Y."/>
            <person name="Takahashi Y."/>
            <person name="Nakagawa K."/>
            <person name="Okumura K."/>
            <person name="Nagase T."/>
            <person name="Nomura N."/>
            <person name="Kikuchi H."/>
            <person name="Masuho Y."/>
            <person name="Yamashita R."/>
            <person name="Nakai K."/>
            <person name="Yada T."/>
            <person name="Nakamura Y."/>
            <person name="Ohara O."/>
            <person name="Isogai T."/>
            <person name="Sugano S."/>
        </authorList>
    </citation>
    <scope>NUCLEOTIDE SEQUENCE [LARGE SCALE MRNA] (ISOFORM 2)</scope>
    <source>
        <tissue>Tongue</tissue>
    </source>
</reference>
<reference key="3">
    <citation type="submission" date="2005-03" db="EMBL/GenBank/DDBJ databases">
        <authorList>
            <person name="Totoki Y."/>
            <person name="Toyoda A."/>
            <person name="Takeda T."/>
            <person name="Sakaki Y."/>
            <person name="Tanaka A."/>
            <person name="Yokoyama S."/>
            <person name="Ohara O."/>
            <person name="Nagase T."/>
            <person name="Kikuno R.F."/>
        </authorList>
    </citation>
    <scope>NUCLEOTIDE SEQUENCE [LARGE SCALE MRNA] (ISOFORM 1)</scope>
    <source>
        <tissue>Brain</tissue>
    </source>
</reference>
<reference key="4">
    <citation type="journal article" date="2006" name="Nature">
        <title>DNA sequence and analysis of human chromosome 8.</title>
        <authorList>
            <person name="Nusbaum C."/>
            <person name="Mikkelsen T.S."/>
            <person name="Zody M.C."/>
            <person name="Asakawa S."/>
            <person name="Taudien S."/>
            <person name="Garber M."/>
            <person name="Kodira C.D."/>
            <person name="Schueler M.G."/>
            <person name="Shimizu A."/>
            <person name="Whittaker C.A."/>
            <person name="Chang J.L."/>
            <person name="Cuomo C.A."/>
            <person name="Dewar K."/>
            <person name="FitzGerald M.G."/>
            <person name="Yang X."/>
            <person name="Allen N.R."/>
            <person name="Anderson S."/>
            <person name="Asakawa T."/>
            <person name="Blechschmidt K."/>
            <person name="Bloom T."/>
            <person name="Borowsky M.L."/>
            <person name="Butler J."/>
            <person name="Cook A."/>
            <person name="Corum B."/>
            <person name="DeArellano K."/>
            <person name="DeCaprio D."/>
            <person name="Dooley K.T."/>
            <person name="Dorris L. III"/>
            <person name="Engels R."/>
            <person name="Gloeckner G."/>
            <person name="Hafez N."/>
            <person name="Hagopian D.S."/>
            <person name="Hall J.L."/>
            <person name="Ishikawa S.K."/>
            <person name="Jaffe D.B."/>
            <person name="Kamat A."/>
            <person name="Kudoh J."/>
            <person name="Lehmann R."/>
            <person name="Lokitsang T."/>
            <person name="Macdonald P."/>
            <person name="Major J.E."/>
            <person name="Matthews C.D."/>
            <person name="Mauceli E."/>
            <person name="Menzel U."/>
            <person name="Mihalev A.H."/>
            <person name="Minoshima S."/>
            <person name="Murayama Y."/>
            <person name="Naylor J.W."/>
            <person name="Nicol R."/>
            <person name="Nguyen C."/>
            <person name="O'Leary S.B."/>
            <person name="O'Neill K."/>
            <person name="Parker S.C.J."/>
            <person name="Polley A."/>
            <person name="Raymond C.K."/>
            <person name="Reichwald K."/>
            <person name="Rodriguez J."/>
            <person name="Sasaki T."/>
            <person name="Schilhabel M."/>
            <person name="Siddiqui R."/>
            <person name="Smith C.L."/>
            <person name="Sneddon T.P."/>
            <person name="Talamas J.A."/>
            <person name="Tenzin P."/>
            <person name="Topham K."/>
            <person name="Venkataraman V."/>
            <person name="Wen G."/>
            <person name="Yamazaki S."/>
            <person name="Young S.K."/>
            <person name="Zeng Q."/>
            <person name="Zimmer A.R."/>
            <person name="Rosenthal A."/>
            <person name="Birren B.W."/>
            <person name="Platzer M."/>
            <person name="Shimizu N."/>
            <person name="Lander E.S."/>
        </authorList>
    </citation>
    <scope>NUCLEOTIDE SEQUENCE [LARGE SCALE GENOMIC DNA]</scope>
</reference>
<reference key="5">
    <citation type="journal article" date="2004" name="Genome Res.">
        <title>The status, quality, and expansion of the NIH full-length cDNA project: the Mammalian Gene Collection (MGC).</title>
        <authorList>
            <consortium name="The MGC Project Team"/>
        </authorList>
    </citation>
    <scope>NUCLEOTIDE SEQUENCE [LARGE SCALE MRNA] (ISOFORM 1)</scope>
    <source>
        <tissue>Brain</tissue>
    </source>
</reference>
<reference key="6">
    <citation type="journal article" date="1998" name="J. Biol. Chem.">
        <title>Transcriptional activation capacity of the novel PLAG family of zinc finger proteins.</title>
        <authorList>
            <person name="Kas K."/>
            <person name="Voz M.L."/>
            <person name="Hensen K."/>
            <person name="Meyen E."/>
            <person name="Van de Ven W.J.M."/>
        </authorList>
    </citation>
    <scope>TISSUE SPECIFICITY</scope>
    <scope>MUTAGENESIS OF THR-339 AND SER-340</scope>
</reference>
<reference key="7">
    <citation type="journal article" date="1998" name="Oncogene">
        <title>The recurrent translocation t(5;8)(p13;q12) in pleomorphic adenomas results in upregulation of PLAG1 gene expression under control of the LIFR promoter.</title>
        <authorList>
            <person name="Voz M.L."/>
            <person name="Astrom A.-K."/>
            <person name="Kas K."/>
            <person name="Mark J."/>
            <person name="Stenman G."/>
            <person name="Van de Ven W.J.M."/>
        </authorList>
    </citation>
    <scope>CHROMOSOMAL TRANSLOCATION WITH LIFR</scope>
</reference>
<reference key="8">
    <citation type="journal article" date="1999" name="Cancer Res.">
        <title>Conserved mechanism of PLAG1 activation in salivary gland tumors with and without chromosome 8q12 abnormalities: identification of SII as a new fusion partner gene.</title>
        <authorList>
            <person name="Astroem A.-K."/>
            <person name="Voz M.L."/>
            <person name="Kas K."/>
            <person name="Roeijer E."/>
            <person name="Wedell B."/>
            <person name="Mandahl N."/>
            <person name="Van de Ven W."/>
            <person name="Mark J."/>
            <person name="Stenman G."/>
        </authorList>
    </citation>
    <scope>CHROMOSOMAL TRANSLOCATION WITH CTNNB1 AND TCEA1</scope>
    <scope>TISSUE SPECIFICITY</scope>
</reference>
<reference key="9">
    <citation type="journal article" date="2000" name="Cancer Res.">
        <title>PLAG1, the main translocation target in pleomorphic adenoma of the salivary glands, is a positive regulator of IGF-II.</title>
        <authorList>
            <person name="Voz M.L."/>
            <person name="Agten N.S."/>
            <person name="Van de Ven W.J.M."/>
            <person name="Kas K."/>
        </authorList>
    </citation>
    <scope>SUBCELLULAR LOCATION</scope>
    <scope>DNA-BINDING</scope>
    <scope>MUTAGENESIS OF HIS-92 AND HIS-227</scope>
</reference>
<reference key="10">
    <citation type="journal article" date="2000" name="Cancer Res.">
        <title>PLAG1 fusion oncogenes in lipoblastoma.</title>
        <authorList>
            <person name="Hibbard M.K."/>
            <person name="Kozakewich H.P."/>
            <person name="Dal Cin P."/>
            <person name="Sciot R."/>
            <person name="Tan X."/>
            <person name="Xiao S."/>
            <person name="Fletcher J.A."/>
        </authorList>
    </citation>
    <scope>CHROMOSOMAL REARRANGEMENT WITH HAS2 AND COL1A2</scope>
</reference>
<reference key="11">
    <citation type="journal article" date="2002" name="Cancer Res.">
        <title>The tumorigenic diversity of the three PLAG family members is associated with different DNA binding capacities.</title>
        <authorList>
            <person name="Hensen K."/>
            <person name="Van Valckenborgh I.C.C."/>
            <person name="Kas K."/>
            <person name="Van de Ven W.J.M."/>
            <person name="Voz M.L."/>
        </authorList>
    </citation>
    <scope>FUNCTION</scope>
    <scope>MUTAGENESIS OF HIS-227</scope>
</reference>
<reference key="12">
    <citation type="journal article" date="2002" name="J. Biol. Chem.">
        <title>Identification of a karyopherin alpha 2 recognition site in PLAG1, which functions as a nuclear localization signal.</title>
        <authorList>
            <person name="Braem C.V."/>
            <person name="Kas K."/>
            <person name="Meyen E."/>
            <person name="Debiec-Rychter M."/>
            <person name="Van De Ven W.J.M."/>
            <person name="Voz M.L."/>
        </authorList>
    </citation>
    <scope>INTERACTION WITH KPNA2</scope>
    <scope>SUBCELLULAR LOCATION</scope>
    <scope>MUTAGENESIS OF 23-ARG-LYS-24 AND 31-ARG-LYS-32</scope>
</reference>
<reference key="13">
    <citation type="journal article" date="2004" name="Genes Chromosomes Cancer">
        <title>Amplification and overexpression of the IGF2 regulator PLAG1 in hepatoblastoma.</title>
        <authorList>
            <person name="Zatkova A."/>
            <person name="Rouillard J.-M."/>
            <person name="Hartmann W."/>
            <person name="Lamb B.J."/>
            <person name="Kuick R."/>
            <person name="Eckart M."/>
            <person name="von Schweinitz D."/>
            <person name="Koch A."/>
            <person name="Fonatsch C."/>
            <person name="Pietsch T."/>
            <person name="Hanash S.M."/>
            <person name="Wimmer K."/>
        </authorList>
    </citation>
    <scope>FUNCTION</scope>
    <scope>TISSUE SPECIFICITY</scope>
</reference>
<reference key="14">
    <citation type="journal article" date="2004" name="J. Biol. Chem.">
        <title>Repression of the transactivating capacity of the oncoprotein PLAG1 by SUMOylation.</title>
        <authorList>
            <person name="Van Dyck F."/>
            <person name="Delvaux E.L.D."/>
            <person name="Van de Ven W.J.M."/>
            <person name="Chavez M.V."/>
        </authorList>
    </citation>
    <scope>SUMOYLATION</scope>
    <scope>MUTAGENESIS OF LYS-244; LYS-263 AND LYS-353</scope>
    <scope>INTERACTION WITH PIAS PROTEINS</scope>
</reference>
<reference key="15">
    <citation type="journal article" date="2004" name="Oncogene">
        <title>Microarray screening for target genes of the proto-oncogene PLAG1.</title>
        <authorList>
            <person name="Voz M.L."/>
            <person name="Mathys J."/>
            <person name="Hensen K."/>
            <person name="Pendeville H."/>
            <person name="Van Valckenborgh I."/>
            <person name="Van Huffel C."/>
            <person name="Chavez M."/>
            <person name="Van Damme B."/>
            <person name="De Moor B."/>
            <person name="Moreau Y."/>
            <person name="Van de Ven W.J."/>
        </authorList>
    </citation>
    <scope>FUNCTION</scope>
</reference>
<reference key="16">
    <citation type="journal article" date="2005" name="Cancer Genet. Cytogenet.">
        <title>PLAG1-HAS2 fusion in lipoblastoma with masked 8q intrachromosomal rearrangement.</title>
        <authorList>
            <person name="Morerio C."/>
            <person name="Rapella A."/>
            <person name="Rosanda C."/>
            <person name="Tassano E."/>
            <person name="Gambini C."/>
            <person name="Romagnoli G."/>
            <person name="Panarello C."/>
        </authorList>
    </citation>
    <scope>CHROMOSOMAL REARRANGEMENT WITH HAS2</scope>
</reference>
<reference key="17">
    <citation type="journal article" date="2005" name="J. Biol. Chem.">
        <title>Sumoylation and acetylation play opposite roles in the transactivation of PLAG1 and PLAGL2.</title>
        <authorList>
            <person name="Zheng G."/>
            <person name="Yang Y.-C."/>
        </authorList>
    </citation>
    <scope>SUMOYLATION</scope>
    <scope>ACETYLATION</scope>
    <scope>MUTAGENESIS OF LYS-244; LYS-263 AND LYS-353</scope>
    <scope>SUBCELLULAR LOCATION</scope>
</reference>
<reference key="18">
    <citation type="journal article" date="2006" name="Genes Chromosomes Cancer">
        <title>CHCHD7-PLAG1 and TCEA1-PLAG1 gene fusions resulting from cryptic, intrachromosomal 8q rearrangements in pleomorphic salivary gland adenomas.</title>
        <authorList>
            <person name="Asp J."/>
            <person name="Persson F."/>
            <person name="Kost-Alimova M."/>
            <person name="Stenman G."/>
        </authorList>
    </citation>
    <scope>CHROMOSOMAL REARRANGEMENT WITH CHCHD7 AND TCEA1</scope>
</reference>
<reference key="19">
    <citation type="journal article" date="2018" name="Genet. Med.">
        <title>Genetic disruption of the oncogenic HMGA2-PLAG1-IGF2 pathway causes fetal growth restriction.</title>
        <authorList>
            <person name="Abi Habib W."/>
            <person name="Brioude F."/>
            <person name="Edouard T."/>
            <person name="Bennett J.T."/>
            <person name="Lienhardt-Roussie A."/>
            <person name="Tixier F."/>
            <person name="Salem J."/>
            <person name="Yuen T."/>
            <person name="Azzi S."/>
            <person name="Le Bouc Y."/>
            <person name="Harbison M.D."/>
            <person name="Netchine I."/>
        </authorList>
    </citation>
    <scope>INVOLVEMENT IN SRS4</scope>
</reference>